<organism>
    <name type="scientific">Corynebacterium diphtheriae (strain ATCC 700971 / NCTC 13129 / Biotype gravis)</name>
    <dbReference type="NCBI Taxonomy" id="257309"/>
    <lineage>
        <taxon>Bacteria</taxon>
        <taxon>Bacillati</taxon>
        <taxon>Actinomycetota</taxon>
        <taxon>Actinomycetes</taxon>
        <taxon>Mycobacteriales</taxon>
        <taxon>Corynebacteriaceae</taxon>
        <taxon>Corynebacterium</taxon>
    </lineage>
</organism>
<sequence length="200" mass="22400">MRIIGLTGGIGSGKSTVARIWQGCGAIVIDADAIARVLMEPGSTVLEEVSQVFGRDLLDAEGKLRRAELAARAFISEEKTAQLNSITHPAIRRQIRRGIECARAEGVQVLVLDHPLLFESGMSDLVDDVVVVDVPAELRVRRLVDLRGLKEEDARHRIMRQMSDEDRRMRADYVIDNSGSRDVLERLARELWQRFATQVE</sequence>
<feature type="chain" id="PRO_0000172934" description="Dephospho-CoA kinase">
    <location>
        <begin position="1"/>
        <end position="200"/>
    </location>
</feature>
<feature type="domain" description="DPCK" evidence="1">
    <location>
        <begin position="3"/>
        <end position="200"/>
    </location>
</feature>
<feature type="binding site" evidence="1">
    <location>
        <begin position="11"/>
        <end position="16"/>
    </location>
    <ligand>
        <name>ATP</name>
        <dbReference type="ChEBI" id="CHEBI:30616"/>
    </ligand>
</feature>
<reference key="1">
    <citation type="journal article" date="2003" name="Nucleic Acids Res.">
        <title>The complete genome sequence and analysis of Corynebacterium diphtheriae NCTC13129.</title>
        <authorList>
            <person name="Cerdeno-Tarraga A.-M."/>
            <person name="Efstratiou A."/>
            <person name="Dover L.G."/>
            <person name="Holden M.T.G."/>
            <person name="Pallen M.J."/>
            <person name="Bentley S.D."/>
            <person name="Besra G.S."/>
            <person name="Churcher C.M."/>
            <person name="James K.D."/>
            <person name="De Zoysa A."/>
            <person name="Chillingworth T."/>
            <person name="Cronin A."/>
            <person name="Dowd L."/>
            <person name="Feltwell T."/>
            <person name="Hamlin N."/>
            <person name="Holroyd S."/>
            <person name="Jagels K."/>
            <person name="Moule S."/>
            <person name="Quail M.A."/>
            <person name="Rabbinowitsch E."/>
            <person name="Rutherford K.M."/>
            <person name="Thomson N.R."/>
            <person name="Unwin L."/>
            <person name="Whitehead S."/>
            <person name="Barrell B.G."/>
            <person name="Parkhill J."/>
        </authorList>
    </citation>
    <scope>NUCLEOTIDE SEQUENCE [LARGE SCALE GENOMIC DNA]</scope>
    <source>
        <strain>ATCC 700971 / NCTC 13129 / Biotype gravis</strain>
    </source>
</reference>
<keyword id="KW-0067">ATP-binding</keyword>
<keyword id="KW-0173">Coenzyme A biosynthesis</keyword>
<keyword id="KW-0963">Cytoplasm</keyword>
<keyword id="KW-0418">Kinase</keyword>
<keyword id="KW-0547">Nucleotide-binding</keyword>
<keyword id="KW-1185">Reference proteome</keyword>
<keyword id="KW-0808">Transferase</keyword>
<name>COAE_CORDI</name>
<protein>
    <recommendedName>
        <fullName evidence="1">Dephospho-CoA kinase</fullName>
        <ecNumber evidence="1">2.7.1.24</ecNumber>
    </recommendedName>
    <alternativeName>
        <fullName evidence="1">Dephosphocoenzyme A kinase</fullName>
    </alternativeName>
</protein>
<dbReference type="EC" id="2.7.1.24" evidence="1"/>
<dbReference type="EMBL" id="BX248357">
    <property type="protein sequence ID" value="CAE49672.1"/>
    <property type="molecule type" value="Genomic_DNA"/>
</dbReference>
<dbReference type="RefSeq" id="WP_010934842.1">
    <property type="nucleotide sequence ID" value="NC_002935.2"/>
</dbReference>
<dbReference type="SMR" id="Q6NHI5"/>
<dbReference type="STRING" id="257309.DIP1152"/>
<dbReference type="KEGG" id="cdi:DIP1152"/>
<dbReference type="PATRIC" id="fig|257309.4.peg.1134"/>
<dbReference type="HOGENOM" id="CLU_057180_0_0_11"/>
<dbReference type="UniPathway" id="UPA00241">
    <property type="reaction ID" value="UER00356"/>
</dbReference>
<dbReference type="Proteomes" id="UP000002198">
    <property type="component" value="Chromosome"/>
</dbReference>
<dbReference type="GO" id="GO:0005737">
    <property type="term" value="C:cytoplasm"/>
    <property type="evidence" value="ECO:0007669"/>
    <property type="project" value="UniProtKB-SubCell"/>
</dbReference>
<dbReference type="GO" id="GO:0005524">
    <property type="term" value="F:ATP binding"/>
    <property type="evidence" value="ECO:0007669"/>
    <property type="project" value="UniProtKB-UniRule"/>
</dbReference>
<dbReference type="GO" id="GO:0004140">
    <property type="term" value="F:dephospho-CoA kinase activity"/>
    <property type="evidence" value="ECO:0007669"/>
    <property type="project" value="UniProtKB-UniRule"/>
</dbReference>
<dbReference type="GO" id="GO:0015937">
    <property type="term" value="P:coenzyme A biosynthetic process"/>
    <property type="evidence" value="ECO:0007669"/>
    <property type="project" value="UniProtKB-UniRule"/>
</dbReference>
<dbReference type="CDD" id="cd02022">
    <property type="entry name" value="DPCK"/>
    <property type="match status" value="1"/>
</dbReference>
<dbReference type="Gene3D" id="3.40.50.300">
    <property type="entry name" value="P-loop containing nucleotide triphosphate hydrolases"/>
    <property type="match status" value="1"/>
</dbReference>
<dbReference type="HAMAP" id="MF_00376">
    <property type="entry name" value="Dephospho_CoA_kinase"/>
    <property type="match status" value="1"/>
</dbReference>
<dbReference type="InterPro" id="IPR001977">
    <property type="entry name" value="Depp_CoAkinase"/>
</dbReference>
<dbReference type="InterPro" id="IPR027417">
    <property type="entry name" value="P-loop_NTPase"/>
</dbReference>
<dbReference type="NCBIfam" id="TIGR00152">
    <property type="entry name" value="dephospho-CoA kinase"/>
    <property type="match status" value="1"/>
</dbReference>
<dbReference type="PANTHER" id="PTHR10695:SF46">
    <property type="entry name" value="BIFUNCTIONAL COENZYME A SYNTHASE-RELATED"/>
    <property type="match status" value="1"/>
</dbReference>
<dbReference type="PANTHER" id="PTHR10695">
    <property type="entry name" value="DEPHOSPHO-COA KINASE-RELATED"/>
    <property type="match status" value="1"/>
</dbReference>
<dbReference type="Pfam" id="PF01121">
    <property type="entry name" value="CoaE"/>
    <property type="match status" value="1"/>
</dbReference>
<dbReference type="SUPFAM" id="SSF52540">
    <property type="entry name" value="P-loop containing nucleoside triphosphate hydrolases"/>
    <property type="match status" value="1"/>
</dbReference>
<dbReference type="PROSITE" id="PS51219">
    <property type="entry name" value="DPCK"/>
    <property type="match status" value="1"/>
</dbReference>
<gene>
    <name evidence="1" type="primary">coaE</name>
    <name type="ordered locus">DIP1152</name>
</gene>
<accession>Q6NHI5</accession>
<evidence type="ECO:0000255" key="1">
    <source>
        <dbReference type="HAMAP-Rule" id="MF_00376"/>
    </source>
</evidence>
<comment type="function">
    <text evidence="1">Catalyzes the phosphorylation of the 3'-hydroxyl group of dephosphocoenzyme A to form coenzyme A.</text>
</comment>
<comment type="catalytic activity">
    <reaction evidence="1">
        <text>3'-dephospho-CoA + ATP = ADP + CoA + H(+)</text>
        <dbReference type="Rhea" id="RHEA:18245"/>
        <dbReference type="ChEBI" id="CHEBI:15378"/>
        <dbReference type="ChEBI" id="CHEBI:30616"/>
        <dbReference type="ChEBI" id="CHEBI:57287"/>
        <dbReference type="ChEBI" id="CHEBI:57328"/>
        <dbReference type="ChEBI" id="CHEBI:456216"/>
        <dbReference type="EC" id="2.7.1.24"/>
    </reaction>
</comment>
<comment type="pathway">
    <text evidence="1">Cofactor biosynthesis; coenzyme A biosynthesis; CoA from (R)-pantothenate: step 5/5.</text>
</comment>
<comment type="subcellular location">
    <subcellularLocation>
        <location evidence="1">Cytoplasm</location>
    </subcellularLocation>
</comment>
<comment type="similarity">
    <text evidence="1">Belongs to the CoaE family.</text>
</comment>
<proteinExistence type="inferred from homology"/>